<evidence type="ECO:0000250" key="1">
    <source>
        <dbReference type="UniProtKB" id="Q7L5Y1"/>
    </source>
</evidence>
<evidence type="ECO:0000250" key="2">
    <source>
        <dbReference type="UniProtKB" id="Q8P3K2"/>
    </source>
</evidence>
<evidence type="ECO:0000255" key="3"/>
<evidence type="ECO:0000305" key="4"/>
<comment type="function">
    <text evidence="1">Plays a role in the catabolism of L-fucose, a sugar that is part of the carbohydrates that are attached to cellular glycoproteins. Catalyzes the dehydration of L-fuconate to 2-keto-3-deoxy-L-fuconate by the abstraction of the 2-proton to generate an enediolate intermediate that is stabilized by the magnesium ion. May down-regulate thymidylate synthase activity, possibly already at the RNA level, by promoting the degradation of TYMS mRNA via an antisense RNA-based mechanism.</text>
</comment>
<comment type="catalytic activity">
    <reaction evidence="1">
        <text>L-fuconate = 2-dehydro-3-deoxy-L-fuconate + H2O</text>
        <dbReference type="Rhea" id="RHEA:22772"/>
        <dbReference type="ChEBI" id="CHEBI:15377"/>
        <dbReference type="ChEBI" id="CHEBI:21291"/>
        <dbReference type="ChEBI" id="CHEBI:37448"/>
        <dbReference type="EC" id="4.2.1.68"/>
    </reaction>
</comment>
<comment type="cofactor">
    <cofactor evidence="1">
        <name>Mg(2+)</name>
        <dbReference type="ChEBI" id="CHEBI:18420"/>
    </cofactor>
    <text evidence="1">Binds 1 Mg(2+) ion per subunit.</text>
</comment>
<comment type="subcellular location">
    <subcellularLocation>
        <location evidence="1">Mitochondrion</location>
    </subcellularLocation>
</comment>
<comment type="PTM">
    <text evidence="1">Could be sumoylated.</text>
</comment>
<comment type="similarity">
    <text evidence="4">Belongs to the mandelate racemase/muconate lactonizing enzyme family. ENOSF1 subfamily.</text>
</comment>
<protein>
    <recommendedName>
        <fullName>Mitochondrial enolase superfamily member 1</fullName>
        <ecNumber evidence="1">4.2.1.68</ecNumber>
    </recommendedName>
    <alternativeName>
        <fullName>L-fuconate dehydratase</fullName>
    </alternativeName>
</protein>
<sequence length="443" mass="49792">MVRGRIFRLSVRDVRFPTSLGGHGSDAMHTDPDYSAAYVVIETDAEDGIKGCGITFTLGKGTEVVVCAVNALAHHVLNKDLKDIVGDFRGFYRQLTSDGQPRWIGPEKGVVHLATAAVLNAVWDLWAKQEGKPVWKLLVDMDPRTLVSCIDFRYITDVLTEEDALEILQKGQVGKKEREKQMLAQGYPAYTTSCAWLGYSDDTLKQLCAQALKDGWTRFKVKVGADLQDDVRRCQIIRDMIGLEKTLMMDANQRWDVPEAVEWMSKLAKFKPLWIEEPTSPDDILGHATISKALVPLGIGIATGEQCHNRVIFKQLLQAKALQFLQIDSCRLGSVNENLSVLLMAKKFEIPVCPHAGGVGLCELVQHLIIFDYISVSASLENRMCEYVDHLHEHFKYPVMIQRASYMPPKDPGYSTEMKEESVKKHQYPDGEVWKKLLAAQEN</sequence>
<gene>
    <name type="primary">ENOSF1</name>
</gene>
<organism>
    <name type="scientific">Pongo abelii</name>
    <name type="common">Sumatran orangutan</name>
    <name type="synonym">Pongo pygmaeus abelii</name>
    <dbReference type="NCBI Taxonomy" id="9601"/>
    <lineage>
        <taxon>Eukaryota</taxon>
        <taxon>Metazoa</taxon>
        <taxon>Chordata</taxon>
        <taxon>Craniata</taxon>
        <taxon>Vertebrata</taxon>
        <taxon>Euteleostomi</taxon>
        <taxon>Mammalia</taxon>
        <taxon>Eutheria</taxon>
        <taxon>Euarchontoglires</taxon>
        <taxon>Primates</taxon>
        <taxon>Haplorrhini</taxon>
        <taxon>Catarrhini</taxon>
        <taxon>Hominidae</taxon>
        <taxon>Pongo</taxon>
    </lineage>
</organism>
<accession>Q5RAT4</accession>
<reference key="1">
    <citation type="submission" date="2004-11" db="EMBL/GenBank/DDBJ databases">
        <authorList>
            <consortium name="The German cDNA consortium"/>
        </authorList>
    </citation>
    <scope>NUCLEOTIDE SEQUENCE [LARGE SCALE MRNA]</scope>
    <source>
        <tissue>Kidney</tissue>
    </source>
</reference>
<dbReference type="EC" id="4.2.1.68" evidence="1"/>
<dbReference type="EMBL" id="CR858928">
    <property type="protein sequence ID" value="CAH91126.1"/>
    <property type="molecule type" value="mRNA"/>
</dbReference>
<dbReference type="RefSeq" id="NP_001125659.1">
    <property type="nucleotide sequence ID" value="NM_001132187.2"/>
</dbReference>
<dbReference type="SMR" id="Q5RAT4"/>
<dbReference type="FunCoup" id="Q5RAT4">
    <property type="interactions" value="49"/>
</dbReference>
<dbReference type="STRING" id="9601.ENSPPYP00000010153"/>
<dbReference type="GeneID" id="100172579"/>
<dbReference type="KEGG" id="pon:100172579"/>
<dbReference type="CTD" id="55556"/>
<dbReference type="eggNOG" id="ENOG502QU7C">
    <property type="taxonomic scope" value="Eukaryota"/>
</dbReference>
<dbReference type="InParanoid" id="Q5RAT4"/>
<dbReference type="OrthoDB" id="14161at2759"/>
<dbReference type="Proteomes" id="UP000001595">
    <property type="component" value="Unplaced"/>
</dbReference>
<dbReference type="GO" id="GO:0005739">
    <property type="term" value="C:mitochondrion"/>
    <property type="evidence" value="ECO:0007669"/>
    <property type="project" value="UniProtKB-SubCell"/>
</dbReference>
<dbReference type="GO" id="GO:0016853">
    <property type="term" value="F:isomerase activity"/>
    <property type="evidence" value="ECO:0007669"/>
    <property type="project" value="UniProtKB-KW"/>
</dbReference>
<dbReference type="GO" id="GO:0050023">
    <property type="term" value="F:L-fuconate dehydratase activity"/>
    <property type="evidence" value="ECO:0000250"/>
    <property type="project" value="UniProtKB"/>
</dbReference>
<dbReference type="GO" id="GO:0000287">
    <property type="term" value="F:magnesium ion binding"/>
    <property type="evidence" value="ECO:0000250"/>
    <property type="project" value="UniProtKB"/>
</dbReference>
<dbReference type="GO" id="GO:0009063">
    <property type="term" value="P:amino acid catabolic process"/>
    <property type="evidence" value="ECO:0007669"/>
    <property type="project" value="InterPro"/>
</dbReference>
<dbReference type="GO" id="GO:0016052">
    <property type="term" value="P:carbohydrate catabolic process"/>
    <property type="evidence" value="ECO:0000250"/>
    <property type="project" value="UniProtKB"/>
</dbReference>
<dbReference type="CDD" id="cd03324">
    <property type="entry name" value="rTSbeta_L-fuconate_dehydratase"/>
    <property type="match status" value="1"/>
</dbReference>
<dbReference type="FunFam" id="3.20.20.120:FF:000007">
    <property type="entry name" value="Mitochondrial enolase superfamily member 1"/>
    <property type="match status" value="1"/>
</dbReference>
<dbReference type="FunFam" id="3.30.390.10:FF:000006">
    <property type="entry name" value="Mitochondrial enolase superfamily member 1"/>
    <property type="match status" value="1"/>
</dbReference>
<dbReference type="Gene3D" id="3.20.20.120">
    <property type="entry name" value="Enolase-like C-terminal domain"/>
    <property type="match status" value="1"/>
</dbReference>
<dbReference type="Gene3D" id="3.30.390.10">
    <property type="entry name" value="Enolase-like, N-terminal domain"/>
    <property type="match status" value="1"/>
</dbReference>
<dbReference type="InterPro" id="IPR036849">
    <property type="entry name" value="Enolase-like_C_sf"/>
</dbReference>
<dbReference type="InterPro" id="IPR029017">
    <property type="entry name" value="Enolase-like_N"/>
</dbReference>
<dbReference type="InterPro" id="IPR029065">
    <property type="entry name" value="Enolase_C-like"/>
</dbReference>
<dbReference type="InterPro" id="IPR034610">
    <property type="entry name" value="L-fuconate_dehydratase"/>
</dbReference>
<dbReference type="InterPro" id="IPR018110">
    <property type="entry name" value="Mandel_Rmase/mucon_lact_enz_CS"/>
</dbReference>
<dbReference type="InterPro" id="IPR013342">
    <property type="entry name" value="Mandelate_racemase_C"/>
</dbReference>
<dbReference type="InterPro" id="IPR013341">
    <property type="entry name" value="Mandelate_racemase_N_dom"/>
</dbReference>
<dbReference type="InterPro" id="IPR046945">
    <property type="entry name" value="RHMD-like"/>
</dbReference>
<dbReference type="PANTHER" id="PTHR13794">
    <property type="entry name" value="ENOLASE SUPERFAMILY, MANDELATE RACEMASE"/>
    <property type="match status" value="1"/>
</dbReference>
<dbReference type="PANTHER" id="PTHR13794:SF58">
    <property type="entry name" value="MITOCHONDRIAL ENOLASE SUPERFAMILY MEMBER 1"/>
    <property type="match status" value="1"/>
</dbReference>
<dbReference type="Pfam" id="PF13378">
    <property type="entry name" value="MR_MLE_C"/>
    <property type="match status" value="1"/>
</dbReference>
<dbReference type="Pfam" id="PF02746">
    <property type="entry name" value="MR_MLE_N"/>
    <property type="match status" value="1"/>
</dbReference>
<dbReference type="SFLD" id="SFLDF00111">
    <property type="entry name" value="L-fuconate_dehydratase"/>
    <property type="match status" value="1"/>
</dbReference>
<dbReference type="SFLD" id="SFLDG00179">
    <property type="entry name" value="mandelate_racemase"/>
    <property type="match status" value="1"/>
</dbReference>
<dbReference type="SMART" id="SM00922">
    <property type="entry name" value="MR_MLE"/>
    <property type="match status" value="1"/>
</dbReference>
<dbReference type="SUPFAM" id="SSF51604">
    <property type="entry name" value="Enolase C-terminal domain-like"/>
    <property type="match status" value="1"/>
</dbReference>
<dbReference type="SUPFAM" id="SSF54826">
    <property type="entry name" value="Enolase N-terminal domain-like"/>
    <property type="match status" value="1"/>
</dbReference>
<dbReference type="PROSITE" id="PS00909">
    <property type="entry name" value="MR_MLE_2"/>
    <property type="match status" value="1"/>
</dbReference>
<name>ENOF1_PONAB</name>
<feature type="chain" id="PRO_0000331653" description="Mitochondrial enolase superfamily member 1">
    <location>
        <begin position="1"/>
        <end position="443"/>
    </location>
</feature>
<feature type="active site" description="Proton donor/acceptor" evidence="2">
    <location>
        <position position="222"/>
    </location>
</feature>
<feature type="active site" evidence="3">
    <location>
        <position position="355"/>
    </location>
</feature>
<feature type="binding site" evidence="2">
    <location>
        <begin position="24"/>
        <end position="26"/>
    </location>
    <ligand>
        <name>substrate</name>
    </ligand>
</feature>
<feature type="binding site" evidence="2">
    <location>
        <position position="34"/>
    </location>
    <ligand>
        <name>substrate</name>
    </ligand>
</feature>
<feature type="binding site" evidence="2">
    <location>
        <position position="220"/>
    </location>
    <ligand>
        <name>substrate</name>
    </ligand>
</feature>
<feature type="binding site" evidence="1">
    <location>
        <position position="250"/>
    </location>
    <ligand>
        <name>Mg(2+)</name>
        <dbReference type="ChEBI" id="CHEBI:18420"/>
    </ligand>
</feature>
<feature type="binding site" evidence="2">
    <location>
        <position position="252"/>
    </location>
    <ligand>
        <name>substrate</name>
    </ligand>
</feature>
<feature type="binding site" evidence="1">
    <location>
        <position position="276"/>
    </location>
    <ligand>
        <name>Mg(2+)</name>
        <dbReference type="ChEBI" id="CHEBI:18420"/>
    </ligand>
</feature>
<feature type="binding site" evidence="2">
    <location>
        <position position="276"/>
    </location>
    <ligand>
        <name>substrate</name>
    </ligand>
</feature>
<feature type="binding site" evidence="1">
    <location>
        <position position="305"/>
    </location>
    <ligand>
        <name>Mg(2+)</name>
        <dbReference type="ChEBI" id="CHEBI:18420"/>
    </ligand>
</feature>
<feature type="binding site" evidence="2">
    <location>
        <position position="305"/>
    </location>
    <ligand>
        <name>substrate</name>
    </ligand>
</feature>
<feature type="binding site" evidence="2">
    <location>
        <begin position="355"/>
        <end position="357"/>
    </location>
    <ligand>
        <name>substrate</name>
    </ligand>
</feature>
<feature type="binding site" evidence="2">
    <location>
        <position position="386"/>
    </location>
    <ligand>
        <name>substrate</name>
    </ligand>
</feature>
<feature type="modified residue" description="Phosphoserine" evidence="1">
    <location>
        <position position="148"/>
    </location>
</feature>
<keyword id="KW-0413">Isomerase</keyword>
<keyword id="KW-0456">Lyase</keyword>
<keyword id="KW-0460">Magnesium</keyword>
<keyword id="KW-0479">Metal-binding</keyword>
<keyword id="KW-0496">Mitochondrion</keyword>
<keyword id="KW-0597">Phosphoprotein</keyword>
<keyword id="KW-1185">Reference proteome</keyword>
<keyword id="KW-0832">Ubl conjugation</keyword>
<proteinExistence type="evidence at transcript level"/>